<feature type="chain" id="PRO_1000091019" description="Aspartate--tRNA(Asp/Asn) ligase">
    <location>
        <begin position="1"/>
        <end position="595"/>
    </location>
</feature>
<feature type="region of interest" description="Aspartate" evidence="1">
    <location>
        <begin position="202"/>
        <end position="205"/>
    </location>
</feature>
<feature type="binding site" evidence="1">
    <location>
        <position position="178"/>
    </location>
    <ligand>
        <name>L-aspartate</name>
        <dbReference type="ChEBI" id="CHEBI:29991"/>
    </ligand>
</feature>
<feature type="binding site" evidence="1">
    <location>
        <begin position="224"/>
        <end position="226"/>
    </location>
    <ligand>
        <name>ATP</name>
        <dbReference type="ChEBI" id="CHEBI:30616"/>
    </ligand>
</feature>
<feature type="binding site" evidence="1">
    <location>
        <position position="224"/>
    </location>
    <ligand>
        <name>L-aspartate</name>
        <dbReference type="ChEBI" id="CHEBI:29991"/>
    </ligand>
</feature>
<feature type="binding site" evidence="1">
    <location>
        <position position="233"/>
    </location>
    <ligand>
        <name>ATP</name>
        <dbReference type="ChEBI" id="CHEBI:30616"/>
    </ligand>
</feature>
<feature type="binding site" evidence="1">
    <location>
        <position position="458"/>
    </location>
    <ligand>
        <name>L-aspartate</name>
        <dbReference type="ChEBI" id="CHEBI:29991"/>
    </ligand>
</feature>
<feature type="binding site" evidence="1">
    <location>
        <position position="488"/>
    </location>
    <ligand>
        <name>ATP</name>
        <dbReference type="ChEBI" id="CHEBI:30616"/>
    </ligand>
</feature>
<feature type="binding site" evidence="1">
    <location>
        <position position="495"/>
    </location>
    <ligand>
        <name>L-aspartate</name>
        <dbReference type="ChEBI" id="CHEBI:29991"/>
    </ligand>
</feature>
<feature type="binding site" evidence="1">
    <location>
        <begin position="540"/>
        <end position="543"/>
    </location>
    <ligand>
        <name>ATP</name>
        <dbReference type="ChEBI" id="CHEBI:30616"/>
    </ligand>
</feature>
<feature type="site" description="Important for tRNA non-discrimination" evidence="1">
    <location>
        <position position="30"/>
    </location>
</feature>
<protein>
    <recommendedName>
        <fullName evidence="1">Aspartate--tRNA(Asp/Asn) ligase</fullName>
        <ecNumber evidence="1">6.1.1.23</ecNumber>
    </recommendedName>
    <alternativeName>
        <fullName evidence="1">Aspartyl-tRNA synthetase</fullName>
        <shortName evidence="1">AspRS</shortName>
    </alternativeName>
    <alternativeName>
        <fullName evidence="1">Non-discriminating aspartyl-tRNA synthetase</fullName>
        <shortName evidence="1">ND-AspRS</shortName>
    </alternativeName>
</protein>
<dbReference type="EC" id="6.1.1.23" evidence="1"/>
<dbReference type="EMBL" id="CP001037">
    <property type="protein sequence ID" value="ACC81867.1"/>
    <property type="molecule type" value="Genomic_DNA"/>
</dbReference>
<dbReference type="RefSeq" id="WP_012409841.1">
    <property type="nucleotide sequence ID" value="NC_010628.1"/>
</dbReference>
<dbReference type="SMR" id="B2J116"/>
<dbReference type="STRING" id="63737.Npun_F3458"/>
<dbReference type="EnsemblBacteria" id="ACC81867">
    <property type="protein sequence ID" value="ACC81867"/>
    <property type="gene ID" value="Npun_F3458"/>
</dbReference>
<dbReference type="KEGG" id="npu:Npun_F3458"/>
<dbReference type="eggNOG" id="COG0173">
    <property type="taxonomic scope" value="Bacteria"/>
</dbReference>
<dbReference type="HOGENOM" id="CLU_014330_3_2_3"/>
<dbReference type="OrthoDB" id="9802326at2"/>
<dbReference type="PhylomeDB" id="B2J116"/>
<dbReference type="Proteomes" id="UP000001191">
    <property type="component" value="Chromosome"/>
</dbReference>
<dbReference type="GO" id="GO:0005737">
    <property type="term" value="C:cytoplasm"/>
    <property type="evidence" value="ECO:0007669"/>
    <property type="project" value="UniProtKB-SubCell"/>
</dbReference>
<dbReference type="GO" id="GO:0004815">
    <property type="term" value="F:aspartate-tRNA ligase activity"/>
    <property type="evidence" value="ECO:0007669"/>
    <property type="project" value="UniProtKB-UniRule"/>
</dbReference>
<dbReference type="GO" id="GO:0050560">
    <property type="term" value="F:aspartate-tRNA(Asn) ligase activity"/>
    <property type="evidence" value="ECO:0007669"/>
    <property type="project" value="UniProtKB-EC"/>
</dbReference>
<dbReference type="GO" id="GO:0005524">
    <property type="term" value="F:ATP binding"/>
    <property type="evidence" value="ECO:0007669"/>
    <property type="project" value="UniProtKB-UniRule"/>
</dbReference>
<dbReference type="GO" id="GO:0003676">
    <property type="term" value="F:nucleic acid binding"/>
    <property type="evidence" value="ECO:0007669"/>
    <property type="project" value="InterPro"/>
</dbReference>
<dbReference type="GO" id="GO:0006422">
    <property type="term" value="P:aspartyl-tRNA aminoacylation"/>
    <property type="evidence" value="ECO:0007669"/>
    <property type="project" value="UniProtKB-UniRule"/>
</dbReference>
<dbReference type="CDD" id="cd00777">
    <property type="entry name" value="AspRS_core"/>
    <property type="match status" value="1"/>
</dbReference>
<dbReference type="CDD" id="cd04317">
    <property type="entry name" value="EcAspRS_like_N"/>
    <property type="match status" value="1"/>
</dbReference>
<dbReference type="Gene3D" id="3.30.930.10">
    <property type="entry name" value="Bira Bifunctional Protein, Domain 2"/>
    <property type="match status" value="1"/>
</dbReference>
<dbReference type="Gene3D" id="3.30.1360.30">
    <property type="entry name" value="GAD-like domain"/>
    <property type="match status" value="1"/>
</dbReference>
<dbReference type="Gene3D" id="2.40.50.140">
    <property type="entry name" value="Nucleic acid-binding proteins"/>
    <property type="match status" value="1"/>
</dbReference>
<dbReference type="HAMAP" id="MF_00044">
    <property type="entry name" value="Asp_tRNA_synth_type1"/>
    <property type="match status" value="1"/>
</dbReference>
<dbReference type="InterPro" id="IPR004364">
    <property type="entry name" value="Aa-tRNA-synt_II"/>
</dbReference>
<dbReference type="InterPro" id="IPR006195">
    <property type="entry name" value="aa-tRNA-synth_II"/>
</dbReference>
<dbReference type="InterPro" id="IPR045864">
    <property type="entry name" value="aa-tRNA-synth_II/BPL/LPL"/>
</dbReference>
<dbReference type="InterPro" id="IPR004524">
    <property type="entry name" value="Asp-tRNA-ligase_1"/>
</dbReference>
<dbReference type="InterPro" id="IPR047089">
    <property type="entry name" value="Asp-tRNA-ligase_1_N"/>
</dbReference>
<dbReference type="InterPro" id="IPR002312">
    <property type="entry name" value="Asp/Asn-tRNA-synth_IIb"/>
</dbReference>
<dbReference type="InterPro" id="IPR047090">
    <property type="entry name" value="AspRS_core"/>
</dbReference>
<dbReference type="InterPro" id="IPR004115">
    <property type="entry name" value="GAD-like_sf"/>
</dbReference>
<dbReference type="InterPro" id="IPR029351">
    <property type="entry name" value="GAD_dom"/>
</dbReference>
<dbReference type="InterPro" id="IPR012340">
    <property type="entry name" value="NA-bd_OB-fold"/>
</dbReference>
<dbReference type="InterPro" id="IPR004365">
    <property type="entry name" value="NA-bd_OB_tRNA"/>
</dbReference>
<dbReference type="NCBIfam" id="TIGR00459">
    <property type="entry name" value="aspS_bact"/>
    <property type="match status" value="1"/>
</dbReference>
<dbReference type="NCBIfam" id="NF001750">
    <property type="entry name" value="PRK00476.1"/>
    <property type="match status" value="1"/>
</dbReference>
<dbReference type="PANTHER" id="PTHR22594:SF5">
    <property type="entry name" value="ASPARTATE--TRNA LIGASE, MITOCHONDRIAL"/>
    <property type="match status" value="1"/>
</dbReference>
<dbReference type="PANTHER" id="PTHR22594">
    <property type="entry name" value="ASPARTYL/LYSYL-TRNA SYNTHETASE"/>
    <property type="match status" value="1"/>
</dbReference>
<dbReference type="Pfam" id="PF02938">
    <property type="entry name" value="GAD"/>
    <property type="match status" value="1"/>
</dbReference>
<dbReference type="Pfam" id="PF00152">
    <property type="entry name" value="tRNA-synt_2"/>
    <property type="match status" value="1"/>
</dbReference>
<dbReference type="Pfam" id="PF01336">
    <property type="entry name" value="tRNA_anti-codon"/>
    <property type="match status" value="1"/>
</dbReference>
<dbReference type="PRINTS" id="PR01042">
    <property type="entry name" value="TRNASYNTHASP"/>
</dbReference>
<dbReference type="SUPFAM" id="SSF55681">
    <property type="entry name" value="Class II aaRS and biotin synthetases"/>
    <property type="match status" value="1"/>
</dbReference>
<dbReference type="SUPFAM" id="SSF55261">
    <property type="entry name" value="GAD domain-like"/>
    <property type="match status" value="1"/>
</dbReference>
<dbReference type="SUPFAM" id="SSF50249">
    <property type="entry name" value="Nucleic acid-binding proteins"/>
    <property type="match status" value="1"/>
</dbReference>
<dbReference type="PROSITE" id="PS50862">
    <property type="entry name" value="AA_TRNA_LIGASE_II"/>
    <property type="match status" value="1"/>
</dbReference>
<keyword id="KW-0030">Aminoacyl-tRNA synthetase</keyword>
<keyword id="KW-0067">ATP-binding</keyword>
<keyword id="KW-0963">Cytoplasm</keyword>
<keyword id="KW-0436">Ligase</keyword>
<keyword id="KW-0547">Nucleotide-binding</keyword>
<keyword id="KW-0648">Protein biosynthesis</keyword>
<keyword id="KW-1185">Reference proteome</keyword>
<evidence type="ECO:0000255" key="1">
    <source>
        <dbReference type="HAMAP-Rule" id="MF_00044"/>
    </source>
</evidence>
<organism>
    <name type="scientific">Nostoc punctiforme (strain ATCC 29133 / PCC 73102)</name>
    <dbReference type="NCBI Taxonomy" id="63737"/>
    <lineage>
        <taxon>Bacteria</taxon>
        <taxon>Bacillati</taxon>
        <taxon>Cyanobacteriota</taxon>
        <taxon>Cyanophyceae</taxon>
        <taxon>Nostocales</taxon>
        <taxon>Nostocaceae</taxon>
        <taxon>Nostoc</taxon>
    </lineage>
</organism>
<sequence>MRTHYCGELRKEHIGETVTFYGWVDRRRDHGGVVFLDLRDRSGIVQIVSDPQRTPDSYEQANALRNEYVVEITGRVTQRPEESLNTRIPTGEVEIYADKIKLLNAVGKQLPFQVSVADTETVREDLRLKYRYLDLRRERMAQNLQLRHQIVKAMRRYLEDLEGFIEVETPILTRSTPEGARDYVLPSRVNPGEWYALPQSPQLFKQLLMVSGLDRYYQIARCFRDEDLRADRQPEFTQLDMEMSFMSQEEIIELNESLVCHIFKTVKGIELQRPFLRLTYAEGMERYGSDKPDTRYGLELVDVSDIVKDSGFKVFRDTVTNGGIVKILPIPNGNDVISNVRIKPGGDLFKEASEAGAKGLAYIRVRDDGEIDTIGAIKDNLSEEQKQEILRRTGAKAGHLLLFGAGEAATVNKTLDRLRQAIAREFNLIDPDKINLLWITDFPMFEWNADEKRLEALHHPFTAPHPDDLSDLKTARAQAYDLVLNGVEVGGGSLRIYQREIQQQVFEAIGLSPEEAQSKFGFLLEAFEYGTPPHGGIAYGLDRLVMLLAGEESIRDVIAFPKTQQARCLLTDAPSSVDAKQLKELHVASTYKPKS</sequence>
<proteinExistence type="inferred from homology"/>
<comment type="function">
    <text evidence="1">Aspartyl-tRNA synthetase with relaxed tRNA specificity since it is able to aspartylate not only its cognate tRNA(Asp) but also tRNA(Asn). Reaction proceeds in two steps: L-aspartate is first activated by ATP to form Asp-AMP and then transferred to the acceptor end of tRNA(Asp/Asn).</text>
</comment>
<comment type="catalytic activity">
    <reaction evidence="1">
        <text>tRNA(Asx) + L-aspartate + ATP = L-aspartyl-tRNA(Asx) + AMP + diphosphate</text>
        <dbReference type="Rhea" id="RHEA:18349"/>
        <dbReference type="Rhea" id="RHEA-COMP:9710"/>
        <dbReference type="Rhea" id="RHEA-COMP:9711"/>
        <dbReference type="ChEBI" id="CHEBI:29991"/>
        <dbReference type="ChEBI" id="CHEBI:30616"/>
        <dbReference type="ChEBI" id="CHEBI:33019"/>
        <dbReference type="ChEBI" id="CHEBI:78442"/>
        <dbReference type="ChEBI" id="CHEBI:78516"/>
        <dbReference type="ChEBI" id="CHEBI:456215"/>
        <dbReference type="EC" id="6.1.1.23"/>
    </reaction>
</comment>
<comment type="subunit">
    <text evidence="1">Homodimer.</text>
</comment>
<comment type="subcellular location">
    <subcellularLocation>
        <location evidence="1">Cytoplasm</location>
    </subcellularLocation>
</comment>
<comment type="similarity">
    <text evidence="1">Belongs to the class-II aminoacyl-tRNA synthetase family. Type 1 subfamily.</text>
</comment>
<name>SYDND_NOSP7</name>
<gene>
    <name evidence="1" type="primary">aspS</name>
    <name type="ordered locus">Npun_F3458</name>
</gene>
<reference key="1">
    <citation type="journal article" date="2013" name="Plant Physiol.">
        <title>A Nostoc punctiforme Sugar Transporter Necessary to Establish a Cyanobacterium-Plant Symbiosis.</title>
        <authorList>
            <person name="Ekman M."/>
            <person name="Picossi S."/>
            <person name="Campbell E.L."/>
            <person name="Meeks J.C."/>
            <person name="Flores E."/>
        </authorList>
    </citation>
    <scope>NUCLEOTIDE SEQUENCE [LARGE SCALE GENOMIC DNA]</scope>
    <source>
        <strain>ATCC 29133 / PCC 73102</strain>
    </source>
</reference>
<accession>B2J116</accession>